<dbReference type="EMBL" id="LT708304">
    <property type="protein sequence ID" value="SIT99516.1"/>
    <property type="molecule type" value="Genomic_DNA"/>
</dbReference>
<dbReference type="RefSeq" id="NP_854575.1">
    <property type="nucleotide sequence ID" value="NC_002945.3"/>
</dbReference>
<dbReference type="RefSeq" id="WP_003404660.1">
    <property type="nucleotide sequence ID" value="NC_002945.4"/>
</dbReference>
<dbReference type="SMR" id="P64750"/>
<dbReference type="KEGG" id="mbo:BQ2027_MB0918"/>
<dbReference type="PATRIC" id="fig|233413.5.peg.999"/>
<dbReference type="Proteomes" id="UP000001419">
    <property type="component" value="Chromosome"/>
</dbReference>
<dbReference type="GO" id="GO:0005524">
    <property type="term" value="F:ATP binding"/>
    <property type="evidence" value="ECO:0007669"/>
    <property type="project" value="UniProtKB-KW"/>
</dbReference>
<dbReference type="FunFam" id="3.40.50.300:FF:001666">
    <property type="entry name" value="LuxR family transcriptional regulator"/>
    <property type="match status" value="1"/>
</dbReference>
<dbReference type="Gene3D" id="3.40.50.300">
    <property type="entry name" value="P-loop containing nucleotide triphosphate hydrolases"/>
    <property type="match status" value="1"/>
</dbReference>
<dbReference type="InterPro" id="IPR027417">
    <property type="entry name" value="P-loop_NTPase"/>
</dbReference>
<dbReference type="PANTHER" id="PTHR47691:SF3">
    <property type="entry name" value="HTH-TYPE TRANSCRIPTIONAL REGULATOR RV0890C-RELATED"/>
    <property type="match status" value="1"/>
</dbReference>
<dbReference type="PANTHER" id="PTHR47691">
    <property type="entry name" value="REGULATOR-RELATED"/>
    <property type="match status" value="1"/>
</dbReference>
<dbReference type="SUPFAM" id="SSF52540">
    <property type="entry name" value="P-loop containing nucleoside triphosphate hydrolases"/>
    <property type="match status" value="1"/>
</dbReference>
<keyword id="KW-0067">ATP-binding</keyword>
<keyword id="KW-0547">Nucleotide-binding</keyword>
<keyword id="KW-1185">Reference proteome</keyword>
<name>Y918_MYCBO</name>
<proteinExistence type="predicted"/>
<feature type="chain" id="PRO_0000103736" description="Uncharacterized protein Mb0918">
    <location>
        <begin position="1"/>
        <end position="393"/>
    </location>
</feature>
<feature type="binding site" evidence="1">
    <location>
        <begin position="67"/>
        <end position="74"/>
    </location>
    <ligand>
        <name>ATP</name>
        <dbReference type="ChEBI" id="CHEBI:30616"/>
    </ligand>
</feature>
<accession>P64750</accession>
<accession>A0A1R3XWR3</accession>
<accession>Q10553</accession>
<accession>X2BG43</accession>
<organism>
    <name type="scientific">Mycobacterium bovis (strain ATCC BAA-935 / AF2122/97)</name>
    <dbReference type="NCBI Taxonomy" id="233413"/>
    <lineage>
        <taxon>Bacteria</taxon>
        <taxon>Bacillati</taxon>
        <taxon>Actinomycetota</taxon>
        <taxon>Actinomycetes</taxon>
        <taxon>Mycobacteriales</taxon>
        <taxon>Mycobacteriaceae</taxon>
        <taxon>Mycobacterium</taxon>
        <taxon>Mycobacterium tuberculosis complex</taxon>
    </lineage>
</organism>
<sequence length="393" mass="42873">MPSRATVQEFSDSYPFCHNGFRPIMMPKIVSVQHSTRRHLTSFVGRKAELNDVRRLLSDKRLVTLTGPDGMGKSRLALQIGAQIAHEFTYGRWDCDLATVTDRDCVSISMLNALGLPVQPGLSAIDTLVGVINDARVLLVLDHCEHLLDACAAIIDSLLRSCPRLTILTTSTEAIGLAGELTWRVPPLSLTNDAIELFVDRARRVRSDFAINADTAVTVGEICRRLDGVPLAIELAAARTDTLSPVEILAGLNDRFRLVAGAAGNAVRPEQTLCATVQWSHALLSGPERALLHRLAVFAGGFDLDGAQAVGANDEDFEGYQTLGRFAELVDKAFVVVENNRGRAGYRLLYSVRQYALEKLSESGEADAVLARYRKHLKQPNQVVRAGSGGVRY</sequence>
<reference key="1">
    <citation type="journal article" date="2003" name="Proc. Natl. Acad. Sci. U.S.A.">
        <title>The complete genome sequence of Mycobacterium bovis.</title>
        <authorList>
            <person name="Garnier T."/>
            <person name="Eiglmeier K."/>
            <person name="Camus J.-C."/>
            <person name="Medina N."/>
            <person name="Mansoor H."/>
            <person name="Pryor M."/>
            <person name="Duthoy S."/>
            <person name="Grondin S."/>
            <person name="Lacroix C."/>
            <person name="Monsempe C."/>
            <person name="Simon S."/>
            <person name="Harris B."/>
            <person name="Atkin R."/>
            <person name="Doggett J."/>
            <person name="Mayes R."/>
            <person name="Keating L."/>
            <person name="Wheeler P.R."/>
            <person name="Parkhill J."/>
            <person name="Barrell B.G."/>
            <person name="Cole S.T."/>
            <person name="Gordon S.V."/>
            <person name="Hewinson R.G."/>
        </authorList>
    </citation>
    <scope>NUCLEOTIDE SEQUENCE [LARGE SCALE GENOMIC DNA]</scope>
    <source>
        <strain>ATCC BAA-935 / AF2122/97</strain>
    </source>
</reference>
<reference key="2">
    <citation type="journal article" date="2017" name="Genome Announc.">
        <title>Updated reference genome sequence and annotation of Mycobacterium bovis AF2122/97.</title>
        <authorList>
            <person name="Malone K.M."/>
            <person name="Farrell D."/>
            <person name="Stuber T.P."/>
            <person name="Schubert O.T."/>
            <person name="Aebersold R."/>
            <person name="Robbe-Austerman S."/>
            <person name="Gordon S.V."/>
        </authorList>
    </citation>
    <scope>NUCLEOTIDE SEQUENCE [LARGE SCALE GENOMIC DNA]</scope>
    <scope>GENOME REANNOTATION</scope>
    <source>
        <strain>ATCC BAA-935 / AF2122/97</strain>
    </source>
</reference>
<protein>
    <recommendedName>
        <fullName>Uncharacterized protein Mb0918</fullName>
    </recommendedName>
</protein>
<evidence type="ECO:0000255" key="1"/>
<gene>
    <name type="ordered locus">BQ2027_MB0918</name>
</gene>